<name>EME1_HUMAN</name>
<protein>
    <recommendedName>
        <fullName evidence="17">Structure-specific endonuclease subunit EME1</fullName>
    </recommendedName>
    <alternativeName>
        <fullName evidence="16">Crossover junction endonuclease EME1</fullName>
    </alternativeName>
    <alternativeName>
        <fullName evidence="18">Essential meiotic structure-specific endonuclease 1</fullName>
    </alternativeName>
    <alternativeName>
        <fullName evidence="12">MMS4 homolog</fullName>
        <shortName evidence="12">hMMS4</shortName>
    </alternativeName>
</protein>
<gene>
    <name evidence="13 18" type="primary">EME1</name>
    <name evidence="12" type="synonym">MMS4</name>
</gene>
<reference key="1">
    <citation type="journal article" date="2004" name="Nat. Genet.">
        <title>Complete sequencing and characterization of 21,243 full-length human cDNAs.</title>
        <authorList>
            <person name="Ota T."/>
            <person name="Suzuki Y."/>
            <person name="Nishikawa T."/>
            <person name="Otsuki T."/>
            <person name="Sugiyama T."/>
            <person name="Irie R."/>
            <person name="Wakamatsu A."/>
            <person name="Hayashi K."/>
            <person name="Sato H."/>
            <person name="Nagai K."/>
            <person name="Kimura K."/>
            <person name="Makita H."/>
            <person name="Sekine M."/>
            <person name="Obayashi M."/>
            <person name="Nishi T."/>
            <person name="Shibahara T."/>
            <person name="Tanaka T."/>
            <person name="Ishii S."/>
            <person name="Yamamoto J."/>
            <person name="Saito K."/>
            <person name="Kawai Y."/>
            <person name="Isono Y."/>
            <person name="Nakamura Y."/>
            <person name="Nagahari K."/>
            <person name="Murakami K."/>
            <person name="Yasuda T."/>
            <person name="Iwayanagi T."/>
            <person name="Wagatsuma M."/>
            <person name="Shiratori A."/>
            <person name="Sudo H."/>
            <person name="Hosoiri T."/>
            <person name="Kaku Y."/>
            <person name="Kodaira H."/>
            <person name="Kondo H."/>
            <person name="Sugawara M."/>
            <person name="Takahashi M."/>
            <person name="Kanda K."/>
            <person name="Yokoi T."/>
            <person name="Furuya T."/>
            <person name="Kikkawa E."/>
            <person name="Omura Y."/>
            <person name="Abe K."/>
            <person name="Kamihara K."/>
            <person name="Katsuta N."/>
            <person name="Sato K."/>
            <person name="Tanikawa M."/>
            <person name="Yamazaki M."/>
            <person name="Ninomiya K."/>
            <person name="Ishibashi T."/>
            <person name="Yamashita H."/>
            <person name="Murakawa K."/>
            <person name="Fujimori K."/>
            <person name="Tanai H."/>
            <person name="Kimata M."/>
            <person name="Watanabe M."/>
            <person name="Hiraoka S."/>
            <person name="Chiba Y."/>
            <person name="Ishida S."/>
            <person name="Ono Y."/>
            <person name="Takiguchi S."/>
            <person name="Watanabe S."/>
            <person name="Yosida M."/>
            <person name="Hotuta T."/>
            <person name="Kusano J."/>
            <person name="Kanehori K."/>
            <person name="Takahashi-Fujii A."/>
            <person name="Hara H."/>
            <person name="Tanase T.-O."/>
            <person name="Nomura Y."/>
            <person name="Togiya S."/>
            <person name="Komai F."/>
            <person name="Hara R."/>
            <person name="Takeuchi K."/>
            <person name="Arita M."/>
            <person name="Imose N."/>
            <person name="Musashino K."/>
            <person name="Yuuki H."/>
            <person name="Oshima A."/>
            <person name="Sasaki N."/>
            <person name="Aotsuka S."/>
            <person name="Yoshikawa Y."/>
            <person name="Matsunawa H."/>
            <person name="Ichihara T."/>
            <person name="Shiohata N."/>
            <person name="Sano S."/>
            <person name="Moriya S."/>
            <person name="Momiyama H."/>
            <person name="Satoh N."/>
            <person name="Takami S."/>
            <person name="Terashima Y."/>
            <person name="Suzuki O."/>
            <person name="Nakagawa S."/>
            <person name="Senoh A."/>
            <person name="Mizoguchi H."/>
            <person name="Goto Y."/>
            <person name="Shimizu F."/>
            <person name="Wakebe H."/>
            <person name="Hishigaki H."/>
            <person name="Watanabe T."/>
            <person name="Sugiyama A."/>
            <person name="Takemoto M."/>
            <person name="Kawakami B."/>
            <person name="Yamazaki M."/>
            <person name="Watanabe K."/>
            <person name="Kumagai A."/>
            <person name="Itakura S."/>
            <person name="Fukuzumi Y."/>
            <person name="Fujimori Y."/>
            <person name="Komiyama M."/>
            <person name="Tashiro H."/>
            <person name="Tanigami A."/>
            <person name="Fujiwara T."/>
            <person name="Ono T."/>
            <person name="Yamada K."/>
            <person name="Fujii Y."/>
            <person name="Ozaki K."/>
            <person name="Hirao M."/>
            <person name="Ohmori Y."/>
            <person name="Kawabata A."/>
            <person name="Hikiji T."/>
            <person name="Kobatake N."/>
            <person name="Inagaki H."/>
            <person name="Ikema Y."/>
            <person name="Okamoto S."/>
            <person name="Okitani R."/>
            <person name="Kawakami T."/>
            <person name="Noguchi S."/>
            <person name="Itoh T."/>
            <person name="Shigeta K."/>
            <person name="Senba T."/>
            <person name="Matsumura K."/>
            <person name="Nakajima Y."/>
            <person name="Mizuno T."/>
            <person name="Morinaga M."/>
            <person name="Sasaki M."/>
            <person name="Togashi T."/>
            <person name="Oyama M."/>
            <person name="Hata H."/>
            <person name="Watanabe M."/>
            <person name="Komatsu T."/>
            <person name="Mizushima-Sugano J."/>
            <person name="Satoh T."/>
            <person name="Shirai Y."/>
            <person name="Takahashi Y."/>
            <person name="Nakagawa K."/>
            <person name="Okumura K."/>
            <person name="Nagase T."/>
            <person name="Nomura N."/>
            <person name="Kikuchi H."/>
            <person name="Masuho Y."/>
            <person name="Yamashita R."/>
            <person name="Nakai K."/>
            <person name="Yada T."/>
            <person name="Nakamura Y."/>
            <person name="Ohara O."/>
            <person name="Isogai T."/>
            <person name="Sugano S."/>
        </authorList>
    </citation>
    <scope>NUCLEOTIDE SEQUENCE [LARGE SCALE MRNA] (ISOFORM 1)</scope>
    <scope>VARIANT ASP-69</scope>
</reference>
<reference key="2">
    <citation type="journal article" date="2004" name="Genome Res.">
        <title>The status, quality, and expansion of the NIH full-length cDNA project: the Mammalian Gene Collection (MGC).</title>
        <authorList>
            <consortium name="The MGC Project Team"/>
        </authorList>
    </citation>
    <scope>NUCLEOTIDE SEQUENCE [LARGE SCALE MRNA] (ISOFORM 2)</scope>
    <scope>VARIANT ASP-69</scope>
    <source>
        <tissue>Placenta</tissue>
    </source>
</reference>
<reference key="3">
    <citation type="journal article" date="2003" name="J. Biol. Chem.">
        <title>Identification and characterization of human MUS81-MMS4 structure-specific endonuclease.</title>
        <authorList>
            <person name="Oegruenc M."/>
            <person name="Sancar A."/>
        </authorList>
    </citation>
    <scope>FUNCTION</scope>
    <scope>INTERACTION WITH MUS81</scope>
</reference>
<reference key="4">
    <citation type="journal article" date="2003" name="J. Biol. Chem.">
        <title>Identification and characterization of the human mus81-eme1 endonuclease.</title>
        <authorList>
            <person name="Ciccia A."/>
            <person name="Constantinou A."/>
            <person name="West S.C."/>
        </authorList>
    </citation>
    <scope>FUNCTION</scope>
    <scope>INTERACTION WITH MUS81</scope>
</reference>
<reference key="5">
    <citation type="journal article" date="2004" name="Mol. Biol. Cell">
        <title>RNA interference inhibition of Mus81 reduces mitotic recombination in human cells.</title>
        <authorList>
            <person name="Blais V."/>
            <person name="Gao H."/>
            <person name="Elwell C.A."/>
            <person name="Boddy M.N."/>
            <person name="Gaillard P.-H.L."/>
            <person name="Russell P."/>
            <person name="McGowan C.H."/>
        </authorList>
    </citation>
    <scope>FUNCTION</scope>
    <scope>SELF-ASSOCIATION</scope>
    <scope>INTERACTION WITH MUS81</scope>
    <scope>SUBCELLULAR LOCATION</scope>
</reference>
<reference key="6">
    <citation type="journal article" date="2006" name="Cell">
        <title>Global, in vivo, and site-specific phosphorylation dynamics in signaling networks.</title>
        <authorList>
            <person name="Olsen J.V."/>
            <person name="Blagoev B."/>
            <person name="Gnad F."/>
            <person name="Macek B."/>
            <person name="Kumar C."/>
            <person name="Mortensen P."/>
            <person name="Mann M."/>
        </authorList>
    </citation>
    <scope>PHOSPHORYLATION [LARGE SCALE ANALYSIS] AT SER-84; SER-85 AND SER-87</scope>
    <scope>IDENTIFICATION BY MASS SPECTROMETRY [LARGE SCALE ANALYSIS]</scope>
    <source>
        <tissue>Cervix carcinoma</tissue>
    </source>
</reference>
<reference key="7">
    <citation type="journal article" date="2007" name="Mol. Cell">
        <title>Identification of FAAP24, a Fanconi anemia core complex protein that interacts with FANCM.</title>
        <authorList>
            <person name="Ciccia A."/>
            <person name="Ling C."/>
            <person name="Coulthard R."/>
            <person name="Yan Z."/>
            <person name="Xue Y."/>
            <person name="Meetei A.R."/>
            <person name="Laghmani el H."/>
            <person name="Joenje H."/>
            <person name="McDonald N."/>
            <person name="de Winter J.P."/>
            <person name="Wang W."/>
            <person name="West S.C."/>
        </authorList>
    </citation>
    <scope>FUNCTION</scope>
    <scope>INTERACTION WITH MUS81</scope>
</reference>
<reference key="8">
    <citation type="journal article" date="2008" name="J. Proteome Res.">
        <title>Combining protein-based IMAC, peptide-based IMAC, and MudPIT for efficient phosphoproteomic analysis.</title>
        <authorList>
            <person name="Cantin G.T."/>
            <person name="Yi W."/>
            <person name="Lu B."/>
            <person name="Park S.K."/>
            <person name="Xu T."/>
            <person name="Lee J.-D."/>
            <person name="Yates J.R. III"/>
        </authorList>
    </citation>
    <scope>PHOSPHORYLATION [LARGE SCALE ANALYSIS] AT THR-150</scope>
    <scope>IDENTIFICATION BY MASS SPECTROMETRY [LARGE SCALE ANALYSIS]</scope>
    <source>
        <tissue>Cervix carcinoma</tissue>
    </source>
</reference>
<reference key="9">
    <citation type="journal article" date="2008" name="Proc. Natl. Acad. Sci. U.S.A.">
        <title>A quantitative atlas of mitotic phosphorylation.</title>
        <authorList>
            <person name="Dephoure N."/>
            <person name="Zhou C."/>
            <person name="Villen J."/>
            <person name="Beausoleil S.A."/>
            <person name="Bakalarski C.E."/>
            <person name="Elledge S.J."/>
            <person name="Gygi S.P."/>
        </authorList>
    </citation>
    <scope>PHOSPHORYLATION [LARGE SCALE ANALYSIS] AT SER-12 AND SER-15</scope>
    <scope>IDENTIFICATION BY MASS SPECTROMETRY [LARGE SCALE ANALYSIS]</scope>
    <source>
        <tissue>Cervix carcinoma</tissue>
    </source>
</reference>
<reference key="10">
    <citation type="journal article" date="2009" name="Anal. Chem.">
        <title>Lys-N and trypsin cover complementary parts of the phosphoproteome in a refined SCX-based approach.</title>
        <authorList>
            <person name="Gauci S."/>
            <person name="Helbig A.O."/>
            <person name="Slijper M."/>
            <person name="Krijgsveld J."/>
            <person name="Heck A.J."/>
            <person name="Mohammed S."/>
        </authorList>
    </citation>
    <scope>IDENTIFICATION BY MASS SPECTROMETRY [LARGE SCALE ANALYSIS]</scope>
</reference>
<reference key="11">
    <citation type="journal article" date="2009" name="Sci. Signal.">
        <title>Quantitative phosphoproteomic analysis of T cell receptor signaling reveals system-wide modulation of protein-protein interactions.</title>
        <authorList>
            <person name="Mayya V."/>
            <person name="Lundgren D.H."/>
            <person name="Hwang S.-I."/>
            <person name="Rezaul K."/>
            <person name="Wu L."/>
            <person name="Eng J.K."/>
            <person name="Rodionov V."/>
            <person name="Han D.K."/>
        </authorList>
    </citation>
    <scope>PHOSPHORYLATION [LARGE SCALE ANALYSIS] AT SER-84</scope>
    <scope>IDENTIFICATION BY MASS SPECTROMETRY [LARGE SCALE ANALYSIS]</scope>
    <source>
        <tissue>Leukemic T-cell</tissue>
    </source>
</reference>
<reference key="12">
    <citation type="journal article" date="2010" name="Sci. Signal.">
        <title>Quantitative phosphoproteomics reveals widespread full phosphorylation site occupancy during mitosis.</title>
        <authorList>
            <person name="Olsen J.V."/>
            <person name="Vermeulen M."/>
            <person name="Santamaria A."/>
            <person name="Kumar C."/>
            <person name="Miller M.L."/>
            <person name="Jensen L.J."/>
            <person name="Gnad F."/>
            <person name="Cox J."/>
            <person name="Jensen T.S."/>
            <person name="Nigg E.A."/>
            <person name="Brunak S."/>
            <person name="Mann M."/>
        </authorList>
    </citation>
    <scope>PHOSPHORYLATION [LARGE SCALE ANALYSIS] AT SER-84; SER-85; SER-87; SER-111; SER-117 AND THR-150</scope>
    <scope>IDENTIFICATION BY MASS SPECTROMETRY [LARGE SCALE ANALYSIS]</scope>
    <source>
        <tissue>Cervix carcinoma</tissue>
    </source>
</reference>
<reference key="13">
    <citation type="journal article" date="2011" name="Sci. Signal.">
        <title>System-wide temporal characterization of the proteome and phosphoproteome of human embryonic stem cell differentiation.</title>
        <authorList>
            <person name="Rigbolt K.T."/>
            <person name="Prokhorova T.A."/>
            <person name="Akimov V."/>
            <person name="Henningsen J."/>
            <person name="Johansen P.T."/>
            <person name="Kratchmarova I."/>
            <person name="Kassem M."/>
            <person name="Mann M."/>
            <person name="Olsen J.V."/>
            <person name="Blagoev B."/>
        </authorList>
    </citation>
    <scope>PHOSPHORYLATION [LARGE SCALE ANALYSIS] AT SER-84; SER-85 AND SER-87</scope>
    <scope>IDENTIFICATION BY MASS SPECTROMETRY [LARGE SCALE ANALYSIS]</scope>
</reference>
<reference key="14">
    <citation type="journal article" date="2013" name="J. Proteome Res.">
        <title>Toward a comprehensive characterization of a human cancer cell phosphoproteome.</title>
        <authorList>
            <person name="Zhou H."/>
            <person name="Di Palma S."/>
            <person name="Preisinger C."/>
            <person name="Peng M."/>
            <person name="Polat A.N."/>
            <person name="Heck A.J."/>
            <person name="Mohammed S."/>
        </authorList>
    </citation>
    <scope>PHOSPHORYLATION [LARGE SCALE ANALYSIS] AT SER-15; SER-87; SER-111 AND THR-150</scope>
    <scope>IDENTIFICATION BY MASS SPECTROMETRY [LARGE SCALE ANALYSIS]</scope>
    <source>
        <tissue>Cervix carcinoma</tissue>
        <tissue>Erythroleukemia</tissue>
    </source>
</reference>
<reference key="15">
    <citation type="journal article" date="2014" name="Cell Rep.">
        <title>MUS81-EME2 promotes replication fork restart.</title>
        <authorList>
            <person name="Pepe A."/>
            <person name="West S.C."/>
        </authorList>
    </citation>
    <scope>FUNCTION</scope>
    <scope>SUBUNIT</scope>
</reference>
<reference key="16">
    <citation type="journal article" date="2017" name="Nat. Struct. Mol. Biol.">
        <title>Site-specific mapping of the human SUMO proteome reveals co-modification with phosphorylation.</title>
        <authorList>
            <person name="Hendriks I.A."/>
            <person name="Lyon D."/>
            <person name="Young C."/>
            <person name="Jensen L.J."/>
            <person name="Vertegaal A.C."/>
            <person name="Nielsen M.L."/>
        </authorList>
    </citation>
    <scope>SUMOYLATION [LARGE SCALE ANALYSIS] AT LYS-103; LYS-136 AND LYS-141</scope>
    <scope>IDENTIFICATION BY MASS SPECTROMETRY [LARGE SCALE ANALYSIS]</scope>
</reference>
<reference key="17">
    <citation type="journal article" date="2022" name="Structure">
        <title>Crystal structure of the human MUS81-EME2 complex.</title>
        <authorList>
            <person name="Hua Z."/>
            <person name="Fang Q."/>
            <person name="Zhang D."/>
            <person name="Luo Z."/>
            <person name="Yuan C."/>
            <person name="Lin Z."/>
        </authorList>
    </citation>
    <scope>FUNCTION</scope>
    <scope>REGION</scope>
</reference>
<reference evidence="19 20 21 22" key="18">
    <citation type="journal article" date="2014" name="EMBO J.">
        <title>Crystal structures of the structure-selective nuclease Mus81-Eme1 bound to flap DNA substrates.</title>
        <authorList>
            <person name="Gwon G.H."/>
            <person name="Jo A."/>
            <person name="Baek K."/>
            <person name="Jin K.S."/>
            <person name="Fu Y."/>
            <person name="Lee J.B."/>
            <person name="Kim Y."/>
            <person name="Cho Y."/>
        </authorList>
    </citation>
    <scope>X-RAY CRYSTALLOGRAPHY (2.80 ANGSTROMS) OF 178-570 IN COMPLEX WITH MUS81 AND DNA SUBSTRATE</scope>
    <scope>FUNCTION</scope>
    <scope>REGION</scope>
    <scope>MUTAGENESIS OF ARG-491; SER-493; ARG-534 AND THR-541</scope>
</reference>
<reference evidence="23 24 25 26 27 28" key="19">
    <citation type="journal article" date="2024" name="ACS Med. Chem. Lett.">
        <title>Fragment-Based Discovery of Novel MUS81 Inhibitors.</title>
        <authorList>
            <person name="Collie G.W."/>
            <person name="Borjesson U."/>
            <person name="Chen Y."/>
            <person name="Dong Z."/>
            <person name="Di Fruscia P."/>
            <person name="Gohlke A."/>
            <person name="Hoyle A."/>
            <person name="Hunt T.A."/>
            <person name="Jesani M.H."/>
            <person name="Luo H."/>
            <person name="Luptak J."/>
            <person name="Milbradt A.G."/>
            <person name="Narasimhan P."/>
            <person name="Packer M."/>
            <person name="Patel S."/>
            <person name="Qiao J."/>
            <person name="Storer R.I."/>
            <person name="Stubbs C.J."/>
            <person name="Tart J."/>
            <person name="Truman C."/>
            <person name="Wang A.T."/>
            <person name="Wheeler M.G."/>
            <person name="Winter-Holt J."/>
        </authorList>
    </citation>
    <scope>X-RAY CRYSTALLOGRAPHY (2.02 ANGSTROMS) OF 246-551 IN COMPLEX WITH MUS81 AND INHIBITORS</scope>
    <scope>FUNCTION</scope>
</reference>
<organism>
    <name type="scientific">Homo sapiens</name>
    <name type="common">Human</name>
    <dbReference type="NCBI Taxonomy" id="9606"/>
    <lineage>
        <taxon>Eukaryota</taxon>
        <taxon>Metazoa</taxon>
        <taxon>Chordata</taxon>
        <taxon>Craniata</taxon>
        <taxon>Vertebrata</taxon>
        <taxon>Euteleostomi</taxon>
        <taxon>Mammalia</taxon>
        <taxon>Eutheria</taxon>
        <taxon>Euarchontoglires</taxon>
        <taxon>Primates</taxon>
        <taxon>Haplorrhini</taxon>
        <taxon>Catarrhini</taxon>
        <taxon>Hominidae</taxon>
        <taxon>Homo</taxon>
    </lineage>
</organism>
<sequence length="570" mass="63252">MALKKSSPSLDSGDSDSEELPTFAFLKKEPSSTKRRQPEREEKIVVVDISDCEASCPPAPELFSPPVPEIAETVTQTQPVRLLSSESEDEEEFIPLAQRLTCKFLTHKQLSPEDSSSPVKSVLDHQNNEGASCDWKKPFPKIPEVPLHDTPERSAADNKDLILDPCCQLPAYLSTCPGQSSSLAVTKTNSDILPPQKKTKPSQKVQGRGSHGCRQQRQARQKESTLRRQERKNAALVTRMKAQRPEECLKHIIVVLDPVLLQMEGGGQLLGALQTMECRCVIEAQAVPCSVTWRRRAGPSEDREDWVEEPTVLVLLRAEAFVSMIDNGKQGSLDSTMKGKETLQGFVTDITAKTAGKALSLVIVDQEKCFSAQNPPRRGKQGANKQTKKQQQRQPEASIGSMVSRVDAEEALVDLQLHTEAQAQIVQSWKELADFTCAFTKAVAEAPFKKLRDETTFSFCLESDWAGGVKVDLAGRGLALVWRRQIQQLNRVSLEMASAVVNAYPSPQLLVQAYQQCFSDKERQNLLADIQVRRGEGVTSTSRRIGPELSRRIYLQMTTLQPHLSLDSAD</sequence>
<dbReference type="EMBL" id="AK055926">
    <property type="protein sequence ID" value="BAB71047.1"/>
    <property type="molecule type" value="mRNA"/>
</dbReference>
<dbReference type="EMBL" id="BC016470">
    <property type="protein sequence ID" value="AAH16470.1"/>
    <property type="molecule type" value="mRNA"/>
</dbReference>
<dbReference type="CCDS" id="CCDS11565.1">
    <molecule id="Q96AY2-1"/>
</dbReference>
<dbReference type="CCDS" id="CCDS54141.1">
    <molecule id="Q96AY2-2"/>
</dbReference>
<dbReference type="RefSeq" id="NP_001159603.1">
    <molecule id="Q96AY2-2"/>
    <property type="nucleotide sequence ID" value="NM_001166131.2"/>
</dbReference>
<dbReference type="RefSeq" id="NP_689676.2">
    <molecule id="Q96AY2-1"/>
    <property type="nucleotide sequence ID" value="NM_152463.4"/>
</dbReference>
<dbReference type="RefSeq" id="XP_047291426.1">
    <molecule id="Q96AY2-1"/>
    <property type="nucleotide sequence ID" value="XM_047435470.1"/>
</dbReference>
<dbReference type="PDB" id="2ZIU">
    <property type="method" value="X-ray"/>
    <property type="resolution" value="2.70 A"/>
    <property type="chains" value="B=246-570"/>
</dbReference>
<dbReference type="PDB" id="2ZIV">
    <property type="method" value="X-ray"/>
    <property type="resolution" value="2.70 A"/>
    <property type="chains" value="B=246-367, B=403-570"/>
</dbReference>
<dbReference type="PDB" id="2ZIW">
    <property type="method" value="X-ray"/>
    <property type="resolution" value="2.80 A"/>
    <property type="chains" value="B=246-570"/>
</dbReference>
<dbReference type="PDB" id="2ZIX">
    <property type="method" value="X-ray"/>
    <property type="resolution" value="3.50 A"/>
    <property type="chains" value="B=246-570"/>
</dbReference>
<dbReference type="PDB" id="4P0P">
    <property type="method" value="X-ray"/>
    <property type="resolution" value="2.80 A"/>
    <property type="chains" value="B=178-570"/>
</dbReference>
<dbReference type="PDB" id="4P0Q">
    <property type="method" value="X-ray"/>
    <property type="resolution" value="2.85 A"/>
    <property type="chains" value="B=178-570"/>
</dbReference>
<dbReference type="PDB" id="4P0R">
    <property type="method" value="X-ray"/>
    <property type="resolution" value="6.50 A"/>
    <property type="chains" value="B/D=178-570"/>
</dbReference>
<dbReference type="PDB" id="4P0S">
    <property type="method" value="X-ray"/>
    <property type="resolution" value="6.00 A"/>
    <property type="chains" value="B/D/F/H=178-570"/>
</dbReference>
<dbReference type="PDB" id="9F98">
    <property type="method" value="X-ray"/>
    <property type="resolution" value="2.15 A"/>
    <property type="chains" value="B/D=246-570"/>
</dbReference>
<dbReference type="PDB" id="9F99">
    <property type="method" value="X-ray"/>
    <property type="resolution" value="2.80 A"/>
    <property type="chains" value="B/D/F/H=246-570"/>
</dbReference>
<dbReference type="PDB" id="9F9A">
    <property type="method" value="X-ray"/>
    <property type="resolution" value="2.91 A"/>
    <property type="chains" value="B/D/F/H=246-570"/>
</dbReference>
<dbReference type="PDB" id="9F9K">
    <property type="method" value="X-ray"/>
    <property type="resolution" value="2.73 A"/>
    <property type="chains" value="B/D=246-570"/>
</dbReference>
<dbReference type="PDB" id="9F9L">
    <property type="method" value="X-ray"/>
    <property type="resolution" value="2.02 A"/>
    <property type="chains" value="B/D=246-570"/>
</dbReference>
<dbReference type="PDB" id="9F9M">
    <property type="method" value="X-ray"/>
    <property type="resolution" value="2.47 A"/>
    <property type="chains" value="B/D=246-570"/>
</dbReference>
<dbReference type="PDBsum" id="2ZIU"/>
<dbReference type="PDBsum" id="2ZIV"/>
<dbReference type="PDBsum" id="2ZIW"/>
<dbReference type="PDBsum" id="2ZIX"/>
<dbReference type="PDBsum" id="4P0P"/>
<dbReference type="PDBsum" id="4P0Q"/>
<dbReference type="PDBsum" id="4P0R"/>
<dbReference type="PDBsum" id="4P0S"/>
<dbReference type="PDBsum" id="9F98"/>
<dbReference type="PDBsum" id="9F99"/>
<dbReference type="PDBsum" id="9F9A"/>
<dbReference type="PDBsum" id="9F9K"/>
<dbReference type="PDBsum" id="9F9L"/>
<dbReference type="PDBsum" id="9F9M"/>
<dbReference type="SMR" id="Q96AY2"/>
<dbReference type="BioGRID" id="127026">
    <property type="interactions" value="59"/>
</dbReference>
<dbReference type="ComplexPortal" id="CPX-511">
    <property type="entry name" value="MUS81-EME1 structure-specific endonuclease complex"/>
</dbReference>
<dbReference type="CORUM" id="Q96AY2"/>
<dbReference type="DIP" id="DIP-48629N"/>
<dbReference type="FunCoup" id="Q96AY2">
    <property type="interactions" value="828"/>
</dbReference>
<dbReference type="IntAct" id="Q96AY2">
    <property type="interactions" value="52"/>
</dbReference>
<dbReference type="MINT" id="Q96AY2"/>
<dbReference type="STRING" id="9606.ENSP00000376952"/>
<dbReference type="iPTMnet" id="Q96AY2"/>
<dbReference type="PhosphoSitePlus" id="Q96AY2"/>
<dbReference type="BioMuta" id="EME1"/>
<dbReference type="DMDM" id="88909612"/>
<dbReference type="jPOST" id="Q96AY2"/>
<dbReference type="MassIVE" id="Q96AY2"/>
<dbReference type="PaxDb" id="9606-ENSP00000376952"/>
<dbReference type="PeptideAtlas" id="Q96AY2"/>
<dbReference type="ProteomicsDB" id="76018">
    <molecule id="Q96AY2-1"/>
</dbReference>
<dbReference type="ProteomicsDB" id="76019">
    <molecule id="Q96AY2-2"/>
</dbReference>
<dbReference type="Pumba" id="Q96AY2"/>
<dbReference type="Antibodypedia" id="4245">
    <property type="antibodies" value="232 antibodies from 31 providers"/>
</dbReference>
<dbReference type="DNASU" id="146956"/>
<dbReference type="Ensembl" id="ENST00000338165.9">
    <molecule id="Q96AY2-1"/>
    <property type="protein sequence ID" value="ENSP00000339897.4"/>
    <property type="gene ID" value="ENSG00000154920.15"/>
</dbReference>
<dbReference type="Ensembl" id="ENST00000393271.6">
    <molecule id="Q96AY2-2"/>
    <property type="protein sequence ID" value="ENSP00000376952.2"/>
    <property type="gene ID" value="ENSG00000154920.15"/>
</dbReference>
<dbReference type="Ensembl" id="ENST00000511648.6">
    <molecule id="Q96AY2-2"/>
    <property type="protein sequence ID" value="ENSP00000421700.2"/>
    <property type="gene ID" value="ENSG00000154920.15"/>
</dbReference>
<dbReference type="GeneID" id="146956"/>
<dbReference type="KEGG" id="hsa:146956"/>
<dbReference type="MANE-Select" id="ENST00000338165.9">
    <property type="protein sequence ID" value="ENSP00000339897.4"/>
    <property type="RefSeq nucleotide sequence ID" value="NM_152463.4"/>
    <property type="RefSeq protein sequence ID" value="NP_689676.2"/>
</dbReference>
<dbReference type="UCSC" id="uc002iqs.3">
    <molecule id="Q96AY2-1"/>
    <property type="organism name" value="human"/>
</dbReference>
<dbReference type="AGR" id="HGNC:24965"/>
<dbReference type="CTD" id="146956"/>
<dbReference type="DisGeNET" id="146956"/>
<dbReference type="GeneCards" id="EME1"/>
<dbReference type="HGNC" id="HGNC:24965">
    <property type="gene designation" value="EME1"/>
</dbReference>
<dbReference type="HPA" id="ENSG00000154920">
    <property type="expression patterns" value="Tissue enhanced (bone marrow, epididymis, testis)"/>
</dbReference>
<dbReference type="MIM" id="610885">
    <property type="type" value="gene"/>
</dbReference>
<dbReference type="neXtProt" id="NX_Q96AY2"/>
<dbReference type="OpenTargets" id="ENSG00000154920"/>
<dbReference type="PharmGKB" id="PA134904115"/>
<dbReference type="VEuPathDB" id="HostDB:ENSG00000154920"/>
<dbReference type="eggNOG" id="ENOG502R8ER">
    <property type="taxonomic scope" value="Eukaryota"/>
</dbReference>
<dbReference type="GeneTree" id="ENSGT00530000063937"/>
<dbReference type="HOGENOM" id="CLU_034099_2_0_1"/>
<dbReference type="InParanoid" id="Q96AY2"/>
<dbReference type="OMA" id="FCVESDW"/>
<dbReference type="OrthoDB" id="343092at2759"/>
<dbReference type="PAN-GO" id="Q96AY2">
    <property type="GO annotations" value="5 GO annotations based on evolutionary models"/>
</dbReference>
<dbReference type="PhylomeDB" id="Q96AY2"/>
<dbReference type="TreeFam" id="TF325310"/>
<dbReference type="PathwayCommons" id="Q96AY2"/>
<dbReference type="Reactome" id="R-HSA-5693568">
    <property type="pathway name" value="Resolution of D-loop Structures through Holliday Junction Intermediates"/>
</dbReference>
<dbReference type="Reactome" id="R-HSA-6783310">
    <property type="pathway name" value="Fanconi Anemia Pathway"/>
</dbReference>
<dbReference type="SignaLink" id="Q96AY2"/>
<dbReference type="BioGRID-ORCS" id="146956">
    <property type="hits" value="29 hits in 1159 CRISPR screens"/>
</dbReference>
<dbReference type="CD-CODE" id="91857CE7">
    <property type="entry name" value="Nucleolus"/>
</dbReference>
<dbReference type="EvolutionaryTrace" id="Q96AY2"/>
<dbReference type="GeneWiki" id="EME1"/>
<dbReference type="GenomeRNAi" id="146956"/>
<dbReference type="Pharos" id="Q96AY2">
    <property type="development level" value="Tbio"/>
</dbReference>
<dbReference type="PRO" id="PR:Q96AY2"/>
<dbReference type="Proteomes" id="UP000005640">
    <property type="component" value="Chromosome 17"/>
</dbReference>
<dbReference type="RNAct" id="Q96AY2">
    <property type="molecule type" value="protein"/>
</dbReference>
<dbReference type="Bgee" id="ENSG00000154920">
    <property type="expression patterns" value="Expressed in cauda epididymis and 179 other cell types or tissues"/>
</dbReference>
<dbReference type="ExpressionAtlas" id="Q96AY2">
    <property type="expression patterns" value="baseline and differential"/>
</dbReference>
<dbReference type="GO" id="GO:1905347">
    <property type="term" value="C:endodeoxyribonuclease complex"/>
    <property type="evidence" value="ECO:0000353"/>
    <property type="project" value="ComplexPortal"/>
</dbReference>
<dbReference type="GO" id="GO:0000792">
    <property type="term" value="C:heterochromatin"/>
    <property type="evidence" value="ECO:0007669"/>
    <property type="project" value="Ensembl"/>
</dbReference>
<dbReference type="GO" id="GO:0048476">
    <property type="term" value="C:Holliday junction resolvase complex"/>
    <property type="evidence" value="ECO:0000318"/>
    <property type="project" value="GO_Central"/>
</dbReference>
<dbReference type="GO" id="GO:0043596">
    <property type="term" value="C:nuclear replication fork"/>
    <property type="evidence" value="ECO:0000303"/>
    <property type="project" value="ComplexPortal"/>
</dbReference>
<dbReference type="GO" id="GO:0005730">
    <property type="term" value="C:nucleolus"/>
    <property type="evidence" value="ECO:0007669"/>
    <property type="project" value="UniProtKB-SubCell"/>
</dbReference>
<dbReference type="GO" id="GO:0005654">
    <property type="term" value="C:nucleoplasm"/>
    <property type="evidence" value="ECO:0000304"/>
    <property type="project" value="Reactome"/>
</dbReference>
<dbReference type="GO" id="GO:0003677">
    <property type="term" value="F:DNA binding"/>
    <property type="evidence" value="ECO:0000269"/>
    <property type="project" value="DisProt"/>
</dbReference>
<dbReference type="GO" id="GO:0004519">
    <property type="term" value="F:endonuclease activity"/>
    <property type="evidence" value="ECO:0007669"/>
    <property type="project" value="UniProtKB-KW"/>
</dbReference>
<dbReference type="GO" id="GO:0046872">
    <property type="term" value="F:metal ion binding"/>
    <property type="evidence" value="ECO:0007669"/>
    <property type="project" value="UniProtKB-KW"/>
</dbReference>
<dbReference type="GO" id="GO:0006302">
    <property type="term" value="P:double-strand break repair"/>
    <property type="evidence" value="ECO:0000314"/>
    <property type="project" value="ComplexPortal"/>
</dbReference>
<dbReference type="GO" id="GO:0031573">
    <property type="term" value="P:mitotic intra-S DNA damage checkpoint signaling"/>
    <property type="evidence" value="ECO:0000318"/>
    <property type="project" value="GO_Central"/>
</dbReference>
<dbReference type="GO" id="GO:0031297">
    <property type="term" value="P:replication fork processing"/>
    <property type="evidence" value="ECO:0000314"/>
    <property type="project" value="ComplexPortal"/>
</dbReference>
<dbReference type="GO" id="GO:0000712">
    <property type="term" value="P:resolution of meiotic recombination intermediates"/>
    <property type="evidence" value="ECO:0000318"/>
    <property type="project" value="GO_Central"/>
</dbReference>
<dbReference type="GO" id="GO:0071140">
    <property type="term" value="P:resolution of mitotic recombination intermediates"/>
    <property type="evidence" value="ECO:0000315"/>
    <property type="project" value="UniProtKB"/>
</dbReference>
<dbReference type="GO" id="GO:0072429">
    <property type="term" value="P:response to intra-S DNA damage checkpoint signaling"/>
    <property type="evidence" value="ECO:0000315"/>
    <property type="project" value="MGI"/>
</dbReference>
<dbReference type="CDD" id="cd20081">
    <property type="entry name" value="XPF_nuclease_EME1"/>
    <property type="match status" value="1"/>
</dbReference>
<dbReference type="DisProt" id="DP01877"/>
<dbReference type="FunFam" id="1.10.150.670:FF:000002">
    <property type="entry name" value="Crossover junction endonuclease EME1"/>
    <property type="match status" value="1"/>
</dbReference>
<dbReference type="FunFam" id="3.40.1620.30:FF:000001">
    <property type="entry name" value="Essential meiotic structure-specific endonuclease 1"/>
    <property type="match status" value="1"/>
</dbReference>
<dbReference type="FunFam" id="4.10.800.30:FF:000002">
    <property type="entry name" value="Essential meiotic structure-specific endonuclease 1"/>
    <property type="match status" value="1"/>
</dbReference>
<dbReference type="FunFam" id="4.10.800.30:FF:000004">
    <property type="entry name" value="Essential meiotic structure-specific endonuclease 1"/>
    <property type="match status" value="1"/>
</dbReference>
<dbReference type="Gene3D" id="1.10.150.670">
    <property type="entry name" value="Crossover junction endonuclease EME1, DNA-binding domain"/>
    <property type="match status" value="1"/>
</dbReference>
<dbReference type="Gene3D" id="3.40.1620.30">
    <property type="entry name" value="ERCC4, Mus81-Eme1 complex, nuclease domain, subdomain 1"/>
    <property type="match status" value="1"/>
</dbReference>
<dbReference type="Gene3D" id="4.10.800.30">
    <property type="entry name" value="ERCC4, Mus81-Eme1 complex, nuclease domain, subdomain 2"/>
    <property type="match status" value="1"/>
</dbReference>
<dbReference type="IDEAL" id="IID00096"/>
<dbReference type="InterPro" id="IPR042530">
    <property type="entry name" value="EME1/EME2_C"/>
</dbReference>
<dbReference type="InterPro" id="IPR043086">
    <property type="entry name" value="EME1_nucdom_sub1"/>
</dbReference>
<dbReference type="InterPro" id="IPR043087">
    <property type="entry name" value="Eme1_nucdom_sub2"/>
</dbReference>
<dbReference type="InterPro" id="IPR006166">
    <property type="entry name" value="ERCC4_domain"/>
</dbReference>
<dbReference type="InterPro" id="IPR033310">
    <property type="entry name" value="Mms4/EME1/EME2"/>
</dbReference>
<dbReference type="InterPro" id="IPR047522">
    <property type="entry name" value="XPF_nuclease_EME1_vertebrates"/>
</dbReference>
<dbReference type="PANTHER" id="PTHR21077:SF7">
    <property type="entry name" value="CROSSOVER JUNCTION ENDONUCLEASE EME1"/>
    <property type="match status" value="1"/>
</dbReference>
<dbReference type="PANTHER" id="PTHR21077">
    <property type="entry name" value="EME1 PROTEIN"/>
    <property type="match status" value="1"/>
</dbReference>
<dbReference type="Pfam" id="PF21292">
    <property type="entry name" value="EME1-MUS81_C"/>
    <property type="match status" value="1"/>
</dbReference>
<dbReference type="Pfam" id="PF02732">
    <property type="entry name" value="ERCC4"/>
    <property type="match status" value="1"/>
</dbReference>
<dbReference type="SMART" id="SM00891">
    <property type="entry name" value="ERCC4"/>
    <property type="match status" value="1"/>
</dbReference>
<evidence type="ECO:0000256" key="1">
    <source>
        <dbReference type="SAM" id="MobiDB-lite"/>
    </source>
</evidence>
<evidence type="ECO:0000269" key="2">
    <source>
    </source>
</evidence>
<evidence type="ECO:0000269" key="3">
    <source>
    </source>
</evidence>
<evidence type="ECO:0000269" key="4">
    <source>
    </source>
</evidence>
<evidence type="ECO:0000269" key="5">
    <source>
    </source>
</evidence>
<evidence type="ECO:0000269" key="6">
    <source>
    </source>
</evidence>
<evidence type="ECO:0000269" key="7">
    <source>
    </source>
</evidence>
<evidence type="ECO:0000269" key="8">
    <source>
    </source>
</evidence>
<evidence type="ECO:0000269" key="9">
    <source>
    </source>
</evidence>
<evidence type="ECO:0000269" key="10">
    <source>
    </source>
</evidence>
<evidence type="ECO:0000269" key="11">
    <source>
    </source>
</evidence>
<evidence type="ECO:0000303" key="12">
    <source>
    </source>
</evidence>
<evidence type="ECO:0000303" key="13">
    <source>
    </source>
</evidence>
<evidence type="ECO:0000303" key="14">
    <source>
    </source>
</evidence>
<evidence type="ECO:0000305" key="15"/>
<evidence type="ECO:0000305" key="16">
    <source>
    </source>
</evidence>
<evidence type="ECO:0000305" key="17">
    <source>
    </source>
</evidence>
<evidence type="ECO:0000312" key="18">
    <source>
        <dbReference type="HGNC" id="HGNC:24965"/>
    </source>
</evidence>
<evidence type="ECO:0007744" key="19">
    <source>
        <dbReference type="PDB" id="4P0P"/>
    </source>
</evidence>
<evidence type="ECO:0007744" key="20">
    <source>
        <dbReference type="PDB" id="4P0Q"/>
    </source>
</evidence>
<evidence type="ECO:0007744" key="21">
    <source>
        <dbReference type="PDB" id="4P0R"/>
    </source>
</evidence>
<evidence type="ECO:0007744" key="22">
    <source>
        <dbReference type="PDB" id="4P0S"/>
    </source>
</evidence>
<evidence type="ECO:0007744" key="23">
    <source>
        <dbReference type="PDB" id="9F98"/>
    </source>
</evidence>
<evidence type="ECO:0007744" key="24">
    <source>
        <dbReference type="PDB" id="9F99"/>
    </source>
</evidence>
<evidence type="ECO:0007744" key="25">
    <source>
        <dbReference type="PDB" id="9F9A"/>
    </source>
</evidence>
<evidence type="ECO:0007744" key="26">
    <source>
        <dbReference type="PDB" id="9F9K"/>
    </source>
</evidence>
<evidence type="ECO:0007744" key="27">
    <source>
        <dbReference type="PDB" id="9F9L"/>
    </source>
</evidence>
<evidence type="ECO:0007744" key="28">
    <source>
        <dbReference type="PDB" id="9F9M"/>
    </source>
</evidence>
<evidence type="ECO:0007744" key="29">
    <source>
    </source>
</evidence>
<evidence type="ECO:0007744" key="30">
    <source>
    </source>
</evidence>
<evidence type="ECO:0007744" key="31">
    <source>
    </source>
</evidence>
<evidence type="ECO:0007744" key="32">
    <source>
    </source>
</evidence>
<evidence type="ECO:0007744" key="33">
    <source>
    </source>
</evidence>
<evidence type="ECO:0007744" key="34">
    <source>
    </source>
</evidence>
<evidence type="ECO:0007744" key="35">
    <source>
    </source>
</evidence>
<evidence type="ECO:0007744" key="36">
    <source>
    </source>
</evidence>
<evidence type="ECO:0007829" key="37">
    <source>
        <dbReference type="PDB" id="2ZIU"/>
    </source>
</evidence>
<evidence type="ECO:0007829" key="38">
    <source>
        <dbReference type="PDB" id="2ZIX"/>
    </source>
</evidence>
<evidence type="ECO:0007829" key="39">
    <source>
        <dbReference type="PDB" id="4P0P"/>
    </source>
</evidence>
<evidence type="ECO:0007829" key="40">
    <source>
        <dbReference type="PDB" id="4P0Q"/>
    </source>
</evidence>
<evidence type="ECO:0007829" key="41">
    <source>
        <dbReference type="PDB" id="9F98"/>
    </source>
</evidence>
<feature type="chain" id="PRO_0000223630" description="Structure-specific endonuclease subunit EME1">
    <location>
        <begin position="1"/>
        <end position="570"/>
    </location>
</feature>
<feature type="region of interest" description="Disordered" evidence="1">
    <location>
        <begin position="1"/>
        <end position="42"/>
    </location>
</feature>
<feature type="region of interest" description="Disordered" evidence="1">
    <location>
        <begin position="187"/>
        <end position="233"/>
    </location>
</feature>
<feature type="region of interest" description="Nuclease-like domain; forms the post-nick DNA binding interface and is involved in DNA recognition and bending" evidence="8 10">
    <location>
        <begin position="250"/>
        <end position="456"/>
    </location>
</feature>
<feature type="region of interest" description="Disordered" evidence="1">
    <location>
        <begin position="372"/>
        <end position="400"/>
    </location>
</feature>
<feature type="region of interest" description="Helix-hairpin-helix (2HhH); forms the pre-nick DNA binding interface and is involved in DNA recognition and bending" evidence="8 10">
    <location>
        <begin position="476"/>
        <end position="570"/>
    </location>
</feature>
<feature type="compositionally biased region" description="Low complexity" evidence="1">
    <location>
        <begin position="1"/>
        <end position="12"/>
    </location>
</feature>
<feature type="compositionally biased region" description="Basic and acidic residues" evidence="1">
    <location>
        <begin position="26"/>
        <end position="42"/>
    </location>
</feature>
<feature type="compositionally biased region" description="Basic and acidic residues" evidence="1">
    <location>
        <begin position="220"/>
        <end position="233"/>
    </location>
</feature>
<feature type="modified residue" description="Phosphoserine" evidence="31">
    <location>
        <position position="12"/>
    </location>
</feature>
<feature type="modified residue" description="Phosphoserine" evidence="31 35">
    <location>
        <position position="15"/>
    </location>
</feature>
<feature type="modified residue" description="Phosphoserine" evidence="29 32 33 34">
    <location>
        <position position="84"/>
    </location>
</feature>
<feature type="modified residue" description="Phosphoserine" evidence="29 33 34">
    <location>
        <position position="85"/>
    </location>
</feature>
<feature type="modified residue" description="Phosphoserine" evidence="29 33 34 35">
    <location>
        <position position="87"/>
    </location>
</feature>
<feature type="modified residue" description="Phosphoserine" evidence="33 35">
    <location>
        <position position="111"/>
    </location>
</feature>
<feature type="modified residue" description="Phosphoserine" evidence="33">
    <location>
        <position position="117"/>
    </location>
</feature>
<feature type="modified residue" description="Phosphothreonine" evidence="30 33 35">
    <location>
        <position position="150"/>
    </location>
</feature>
<feature type="cross-link" description="Glycyl lysine isopeptide (Lys-Gly) (interchain with G-Cter in SUMO2)" evidence="36">
    <location>
        <position position="103"/>
    </location>
</feature>
<feature type="cross-link" description="Glycyl lysine isopeptide (Lys-Gly) (interchain with G-Cter in SUMO2)" evidence="36">
    <location>
        <position position="136"/>
    </location>
</feature>
<feature type="cross-link" description="Glycyl lysine isopeptide (Lys-Gly) (interchain with G-Cter in SUMO2)" evidence="36">
    <location>
        <position position="141"/>
    </location>
</feature>
<feature type="splice variant" id="VSP_017284" description="In isoform 2." evidence="14">
    <original>F</original>
    <variation>FSLELLFFDFLPCT</variation>
    <location>
        <position position="370"/>
    </location>
</feature>
<feature type="sequence variant" id="VAR_055708" description="In dbSNP:rs35248609.">
    <original>K</original>
    <variation>N</variation>
    <location>
        <position position="5"/>
    </location>
</feature>
<feature type="sequence variant" id="VAR_025337" description="In dbSNP:rs9896405.">
    <original>I</original>
    <variation>V</variation>
    <location>
        <position position="49"/>
    </location>
</feature>
<feature type="sequence variant" id="VAR_055709" description="In dbSNP:rs17714854.">
    <original>F</original>
    <variation>L</variation>
    <location>
        <position position="63"/>
    </location>
</feature>
<feature type="sequence variant" id="VAR_025338" description="In dbSNP:rs3760413." evidence="5 6">
    <original>E</original>
    <variation>D</variation>
    <location>
        <position position="69"/>
    </location>
</feature>
<feature type="sequence variant" id="VAR_055710" description="In dbSNP:rs7222520.">
    <original>V</original>
    <variation>I</variation>
    <location>
        <position position="347"/>
    </location>
</feature>
<feature type="sequence variant" id="VAR_025339" description="In dbSNP:rs12450550.">
    <original>I</original>
    <variation>T</variation>
    <location>
        <position position="350"/>
    </location>
</feature>
<feature type="mutagenesis site" description="Loss of endonuclease activity; when associated with W-493." evidence="8">
    <original>R</original>
    <variation>E</variation>
    <location>
        <position position="491"/>
    </location>
</feature>
<feature type="mutagenesis site" description="Loss of endonuclease activity; when associated with E-491." evidence="8">
    <original>S</original>
    <variation>W</variation>
    <location>
        <position position="493"/>
    </location>
</feature>
<feature type="mutagenesis site" description="Decreased endonuclease activity; when associated with Y-541." evidence="8">
    <original>R</original>
    <variation>E</variation>
    <location>
        <position position="534"/>
    </location>
</feature>
<feature type="mutagenesis site" description="Decreased endonuclease activity; when associated with E-534." evidence="8">
    <original>T</original>
    <variation>Y</variation>
    <location>
        <position position="541"/>
    </location>
</feature>
<feature type="sequence conflict" description="In Ref. 1; BAB71047." evidence="15" ref="1">
    <original>R</original>
    <variation>Q</variation>
    <location>
        <position position="214"/>
    </location>
</feature>
<feature type="strand" evidence="39">
    <location>
        <begin position="242"/>
        <end position="244"/>
    </location>
</feature>
<feature type="turn" evidence="40">
    <location>
        <begin position="245"/>
        <end position="247"/>
    </location>
</feature>
<feature type="helix" evidence="37">
    <location>
        <begin position="249"/>
        <end position="251"/>
    </location>
</feature>
<feature type="strand" evidence="41">
    <location>
        <begin position="252"/>
        <end position="256"/>
    </location>
</feature>
<feature type="helix" evidence="41">
    <location>
        <begin position="258"/>
        <end position="262"/>
    </location>
</feature>
<feature type="helix" evidence="41">
    <location>
        <begin position="266"/>
        <end position="275"/>
    </location>
</feature>
<feature type="strand" evidence="41">
    <location>
        <begin position="279"/>
        <end position="282"/>
    </location>
</feature>
<feature type="strand" evidence="41">
    <location>
        <begin position="290"/>
        <end position="295"/>
    </location>
</feature>
<feature type="strand" evidence="39">
    <location>
        <begin position="301"/>
        <end position="303"/>
    </location>
</feature>
<feature type="strand" evidence="41">
    <location>
        <begin position="310"/>
        <end position="317"/>
    </location>
</feature>
<feature type="helix" evidence="41">
    <location>
        <begin position="318"/>
        <end position="327"/>
    </location>
</feature>
<feature type="helix" evidence="41">
    <location>
        <begin position="343"/>
        <end position="353"/>
    </location>
</feature>
<feature type="turn" evidence="41">
    <location>
        <begin position="354"/>
        <end position="356"/>
    </location>
</feature>
<feature type="strand" evidence="41">
    <location>
        <begin position="358"/>
        <end position="364"/>
    </location>
</feature>
<feature type="strand" evidence="39">
    <location>
        <begin position="366"/>
        <end position="368"/>
    </location>
</feature>
<feature type="helix" evidence="41">
    <location>
        <begin position="405"/>
        <end position="418"/>
    </location>
</feature>
<feature type="strand" evidence="41">
    <location>
        <begin position="422"/>
        <end position="428"/>
    </location>
</feature>
<feature type="helix" evidence="41">
    <location>
        <begin position="429"/>
        <end position="445"/>
    </location>
</feature>
<feature type="helix" evidence="37">
    <location>
        <begin position="456"/>
        <end position="460"/>
    </location>
</feature>
<feature type="strand" evidence="39">
    <location>
        <begin position="462"/>
        <end position="464"/>
    </location>
</feature>
<feature type="strand" evidence="39">
    <location>
        <begin position="473"/>
        <end position="475"/>
    </location>
</feature>
<feature type="helix" evidence="37">
    <location>
        <begin position="478"/>
        <end position="486"/>
    </location>
</feature>
<feature type="strand" evidence="38">
    <location>
        <begin position="487"/>
        <end position="491"/>
    </location>
</feature>
<feature type="helix" evidence="37">
    <location>
        <begin position="494"/>
        <end position="503"/>
    </location>
</feature>
<feature type="strand" evidence="40">
    <location>
        <begin position="504"/>
        <end position="506"/>
    </location>
</feature>
<feature type="helix" evidence="37">
    <location>
        <begin position="507"/>
        <end position="515"/>
    </location>
</feature>
<feature type="strand" evidence="39">
    <location>
        <begin position="517"/>
        <end position="519"/>
    </location>
</feature>
<feature type="helix" evidence="37">
    <location>
        <begin position="520"/>
        <end position="523"/>
    </location>
</feature>
<feature type="turn" evidence="37">
    <location>
        <begin position="524"/>
        <end position="529"/>
    </location>
</feature>
<feature type="turn" evidence="37">
    <location>
        <begin position="532"/>
        <end position="535"/>
    </location>
</feature>
<feature type="helix" evidence="37">
    <location>
        <begin position="547"/>
        <end position="558"/>
    </location>
</feature>
<keyword id="KW-0002">3D-structure</keyword>
<keyword id="KW-0025">Alternative splicing</keyword>
<keyword id="KW-0227">DNA damage</keyword>
<keyword id="KW-0233">DNA recombination</keyword>
<keyword id="KW-0234">DNA repair</keyword>
<keyword id="KW-1017">Isopeptide bond</keyword>
<keyword id="KW-0460">Magnesium</keyword>
<keyword id="KW-0479">Metal-binding</keyword>
<keyword id="KW-0539">Nucleus</keyword>
<keyword id="KW-0597">Phosphoprotein</keyword>
<keyword id="KW-1267">Proteomics identification</keyword>
<keyword id="KW-1185">Reference proteome</keyword>
<keyword id="KW-0832">Ubl conjugation</keyword>
<proteinExistence type="evidence at protein level"/>
<accession>Q96AY2</accession>
<accession>Q96N62</accession>
<comment type="function">
    <text evidence="2 3 4 7 8 9 10 11">Non-catalytic subunit of the structure-specific, heterodimeric DNA endonuclease MUS81-EME1 which is involved in the maintenance of genome stability. In the complex, EME1 is required for DNA cleavage, participating in DNA recognition and bending (PubMed:12686547, PubMed:12721304, PubMed:14617801, PubMed:17289582, PubMed:24733841, PubMed:24813886, PubMed:35290797, PubMed:39015284). MUS81-EME1 cleaves 3'-flaps and nicked Holliday junctions, and exhibit limited endonuclease activity with 5' flaps and nicked double-stranded DNAs (PubMed:24733841, PubMed:35290797). Active during prometaphase, MUS81-EME1 resolves mitotic recombination intermediates, including Holliday junctions, which form during homologous recombination (PubMed:14617801, PubMed:24813886).</text>
</comment>
<comment type="subunit">
    <text evidence="2 3 4 7 8 9 11">Part of the heterodimeric MUS81-EME1 complex.</text>
</comment>
<comment type="interaction">
    <interactant intactId="EBI-2370825">
        <id>Q96AY2</id>
    </interactant>
    <interactant intactId="EBI-2370806">
        <id>Q96NY9</id>
        <label>MUS81</label>
    </interactant>
    <organismsDiffer>false</organismsDiffer>
    <experiments>11</experiments>
</comment>
<comment type="interaction">
    <interactant intactId="EBI-2370825">
        <id>Q96AY2</id>
    </interactant>
    <interactant intactId="EBI-2370740">
        <id>Q8IY92</id>
        <label>SLX4</label>
    </interactant>
    <organismsDiffer>false</organismsDiffer>
    <experiments>4</experiments>
</comment>
<comment type="subcellular location">
    <subcellularLocation>
        <location evidence="4">Nucleus</location>
        <location evidence="4">Nucleolus</location>
    </subcellularLocation>
    <text>Recruited to regions of DNA damage in S-phase cells.</text>
</comment>
<comment type="alternative products">
    <event type="alternative splicing"/>
    <isoform>
        <id>Q96AY2-1</id>
        <name>1</name>
        <sequence type="displayed"/>
    </isoform>
    <isoform>
        <id>Q96AY2-2</id>
        <name>2</name>
        <sequence type="described" ref="VSP_017284"/>
    </isoform>
</comment>
<comment type="similarity">
    <text evidence="15">Belongs to the EME1/MMS4 family.</text>
</comment>